<feature type="chain" id="PRO_0000409596" description="Cruciform DNA-recognizing protein 1">
    <location>
        <begin position="1"/>
        <end position="465"/>
    </location>
</feature>
<feature type="chain" id="PRO_0000409597" description="CRP1 short N-terminal subpeptide" evidence="1">
    <location>
        <begin position="1"/>
        <end position="160"/>
    </location>
</feature>
<feature type="chain" id="PRO_0000409598" description="CRP1 short C-terminal subpeptide" evidence="1">
    <location>
        <begin position="161"/>
        <end position="465"/>
    </location>
</feature>
<feature type="region of interest" description="Disordered" evidence="3">
    <location>
        <begin position="107"/>
        <end position="227"/>
    </location>
</feature>
<feature type="region of interest" description="X-DNA-binding" evidence="1">
    <location>
        <begin position="160"/>
        <end position="161"/>
    </location>
</feature>
<feature type="region of interest" description="Disordered" evidence="3">
    <location>
        <begin position="247"/>
        <end position="276"/>
    </location>
</feature>
<feature type="region of interest" description="Disordered" evidence="3">
    <location>
        <begin position="298"/>
        <end position="465"/>
    </location>
</feature>
<feature type="compositionally biased region" description="Basic residues" evidence="3">
    <location>
        <begin position="127"/>
        <end position="151"/>
    </location>
</feature>
<feature type="compositionally biased region" description="Acidic residues" evidence="3">
    <location>
        <begin position="156"/>
        <end position="165"/>
    </location>
</feature>
<feature type="compositionally biased region" description="Low complexity" evidence="3">
    <location>
        <begin position="166"/>
        <end position="177"/>
    </location>
</feature>
<feature type="compositionally biased region" description="Basic and acidic residues" evidence="3">
    <location>
        <begin position="337"/>
        <end position="363"/>
    </location>
</feature>
<feature type="compositionally biased region" description="Basic and acidic residues" evidence="3">
    <location>
        <begin position="385"/>
        <end position="398"/>
    </location>
</feature>
<feature type="compositionally biased region" description="Basic and acidic residues" evidence="3">
    <location>
        <begin position="404"/>
        <end position="428"/>
    </location>
</feature>
<feature type="compositionally biased region" description="Basic residues" evidence="3">
    <location>
        <begin position="451"/>
        <end position="465"/>
    </location>
</feature>
<feature type="modified residue" description="Phosphoserine" evidence="2">
    <location>
        <position position="153"/>
    </location>
</feature>
<feature type="modified residue" description="Phosphoserine" evidence="2">
    <location>
        <position position="156"/>
    </location>
</feature>
<feature type="modified residue" description="Phosphothreonine" evidence="2">
    <location>
        <position position="182"/>
    </location>
</feature>
<feature type="modified residue" description="Phosphoserine" evidence="2">
    <location>
        <position position="271"/>
    </location>
</feature>
<feature type="modified residue" description="Phosphothreonine" evidence="2">
    <location>
        <position position="295"/>
    </location>
</feature>
<feature type="modified residue" description="Phosphoserine" evidence="2">
    <location>
        <position position="319"/>
    </location>
</feature>
<feature type="modified residue" description="Phosphoserine" evidence="2">
    <location>
        <position position="343"/>
    </location>
</feature>
<feature type="modified residue" description="Phosphothreonine" evidence="2">
    <location>
        <position position="366"/>
    </location>
</feature>
<feature type="modified residue" description="Phosphoserine" evidence="2">
    <location>
        <position position="394"/>
    </location>
</feature>
<feature type="modified residue" description="Phosphoserine" evidence="2">
    <location>
        <position position="440"/>
    </location>
</feature>
<dbReference type="EMBL" id="CH408053">
    <property type="protein sequence ID" value="EDV09191.1"/>
    <property type="molecule type" value="Genomic_DNA"/>
</dbReference>
<dbReference type="SMR" id="B3LSR0"/>
<dbReference type="HOGENOM" id="CLU_594765_0_0_1"/>
<dbReference type="OrthoDB" id="40992at4893"/>
<dbReference type="Proteomes" id="UP000008335">
    <property type="component" value="Unassembled WGS sequence"/>
</dbReference>
<dbReference type="GO" id="GO:0005737">
    <property type="term" value="C:cytoplasm"/>
    <property type="evidence" value="ECO:0007669"/>
    <property type="project" value="TreeGrafter"/>
</dbReference>
<dbReference type="GO" id="GO:0031588">
    <property type="term" value="C:nucleotide-activated protein kinase complex"/>
    <property type="evidence" value="ECO:0007669"/>
    <property type="project" value="TreeGrafter"/>
</dbReference>
<dbReference type="GO" id="GO:0005634">
    <property type="term" value="C:nucleus"/>
    <property type="evidence" value="ECO:0007669"/>
    <property type="project" value="TreeGrafter"/>
</dbReference>
<dbReference type="GO" id="GO:0003677">
    <property type="term" value="F:DNA binding"/>
    <property type="evidence" value="ECO:0007669"/>
    <property type="project" value="UniProtKB-KW"/>
</dbReference>
<dbReference type="GO" id="GO:0019901">
    <property type="term" value="F:protein kinase binding"/>
    <property type="evidence" value="ECO:0007669"/>
    <property type="project" value="TreeGrafter"/>
</dbReference>
<dbReference type="GO" id="GO:0007165">
    <property type="term" value="P:signal transduction"/>
    <property type="evidence" value="ECO:0007669"/>
    <property type="project" value="TreeGrafter"/>
</dbReference>
<dbReference type="CDD" id="cd02859">
    <property type="entry name" value="E_set_AMPKbeta_like_N"/>
    <property type="match status" value="1"/>
</dbReference>
<dbReference type="FunFam" id="2.60.40.10:FF:001765">
    <property type="entry name" value="Cruciform DNA-recognizing protein 1"/>
    <property type="match status" value="1"/>
</dbReference>
<dbReference type="Gene3D" id="2.60.40.10">
    <property type="entry name" value="Immunoglobulins"/>
    <property type="match status" value="1"/>
</dbReference>
<dbReference type="InterPro" id="IPR032640">
    <property type="entry name" value="AMPK1_CBM"/>
</dbReference>
<dbReference type="InterPro" id="IPR050827">
    <property type="entry name" value="CRP1_MDG1_kinase"/>
</dbReference>
<dbReference type="InterPro" id="IPR013783">
    <property type="entry name" value="Ig-like_fold"/>
</dbReference>
<dbReference type="InterPro" id="IPR014756">
    <property type="entry name" value="Ig_E-set"/>
</dbReference>
<dbReference type="PANTHER" id="PTHR10343">
    <property type="entry name" value="5'-AMP-ACTIVATED PROTEIN KINASE , BETA SUBUNIT"/>
    <property type="match status" value="1"/>
</dbReference>
<dbReference type="PANTHER" id="PTHR10343:SF81">
    <property type="entry name" value="CRUCIFORM DNA-RECOGNIZING PROTEIN 1-RELATED"/>
    <property type="match status" value="1"/>
</dbReference>
<dbReference type="Pfam" id="PF16561">
    <property type="entry name" value="AMPK1_CBM"/>
    <property type="match status" value="1"/>
</dbReference>
<dbReference type="SUPFAM" id="SSF81296">
    <property type="entry name" value="E set domains"/>
    <property type="match status" value="1"/>
</dbReference>
<keyword id="KW-0238">DNA-binding</keyword>
<keyword id="KW-0597">Phosphoprotein</keyword>
<organism>
    <name type="scientific">Saccharomyces cerevisiae (strain RM11-1a)</name>
    <name type="common">Baker's yeast</name>
    <dbReference type="NCBI Taxonomy" id="285006"/>
    <lineage>
        <taxon>Eukaryota</taxon>
        <taxon>Fungi</taxon>
        <taxon>Dikarya</taxon>
        <taxon>Ascomycota</taxon>
        <taxon>Saccharomycotina</taxon>
        <taxon>Saccharomycetes</taxon>
        <taxon>Saccharomycetales</taxon>
        <taxon>Saccharomycetaceae</taxon>
        <taxon>Saccharomyces</taxon>
    </lineage>
</organism>
<accession>B3LSR0</accession>
<name>CRP1_YEAS1</name>
<reference key="1">
    <citation type="submission" date="2005-03" db="EMBL/GenBank/DDBJ databases">
        <title>Annotation of the Saccharomyces cerevisiae RM11-1a genome.</title>
        <authorList>
            <consortium name="The Broad Institute Genome Sequencing Platform"/>
            <person name="Birren B.W."/>
            <person name="Lander E.S."/>
            <person name="Galagan J.E."/>
            <person name="Nusbaum C."/>
            <person name="Devon K."/>
            <person name="Cuomo C."/>
            <person name="Jaffe D.B."/>
            <person name="Butler J."/>
            <person name="Alvarez P."/>
            <person name="Gnerre S."/>
            <person name="Grabherr M."/>
            <person name="Kleber M."/>
            <person name="Mauceli E.W."/>
            <person name="Brockman W."/>
            <person name="MacCallum I.A."/>
            <person name="Rounsley S."/>
            <person name="Young S.K."/>
            <person name="LaButti K."/>
            <person name="Pushparaj V."/>
            <person name="DeCaprio D."/>
            <person name="Crawford M."/>
            <person name="Koehrsen M."/>
            <person name="Engels R."/>
            <person name="Montgomery P."/>
            <person name="Pearson M."/>
            <person name="Howarth C."/>
            <person name="Larson L."/>
            <person name="Luoma S."/>
            <person name="White J."/>
            <person name="O'Leary S."/>
            <person name="Kodira C.D."/>
            <person name="Zeng Q."/>
            <person name="Yandava C."/>
            <person name="Alvarado L."/>
            <person name="Pratt S."/>
            <person name="Kruglyak L."/>
        </authorList>
    </citation>
    <scope>NUCLEOTIDE SEQUENCE [LARGE SCALE GENOMIC DNA]</scope>
    <source>
        <strain>RM11-1a</strain>
    </source>
</reference>
<evidence type="ECO:0000250" key="1"/>
<evidence type="ECO:0000250" key="2">
    <source>
        <dbReference type="UniProtKB" id="P38845"/>
    </source>
</evidence>
<evidence type="ECO:0000256" key="3">
    <source>
        <dbReference type="SAM" id="MobiDB-lite"/>
    </source>
</evidence>
<evidence type="ECO:0000305" key="4"/>
<proteinExistence type="inferred from homology"/>
<protein>
    <recommendedName>
        <fullName>Cruciform DNA-recognizing protein 1</fullName>
    </recommendedName>
    <component>
        <recommendedName>
            <fullName>CRP1 short N-terminal subpeptide</fullName>
        </recommendedName>
    </component>
    <component>
        <recommendedName>
            <fullName>CRP1 short C-terminal subpeptide</fullName>
        </recommendedName>
    </component>
</protein>
<comment type="function">
    <text evidence="1">Cruciform DNA-binding protein which exerts an enhancing effect on the cleavage of cruciform DNA (X-DNA) by endonuclease VII from bacteriophage T4.</text>
</comment>
<comment type="PTM">
    <text evidence="1">Cleaved in the vicinity of position 160 to give an X-DNA-binding N-terminal subpeptide and a non-DNA-binding C-terminal subpeptide.</text>
</comment>
<comment type="similarity">
    <text evidence="4">Belongs to the CRP1/MDG1 family.</text>
</comment>
<sequence>MSSELMFNYTFSWPAGPKDVILTGTFDDWRGTLPLVKTAKGNFEITMPVKLANKDDTFQFKFIVDGVWCVSDSYKKEHVSEGIENNFLQITDLVETQEVAGASRIPEAGGLLCGKPPRSAGPPSTSNRKKNKRNNKKRRSKLKKKSTKNNKKSNESLDDNEEEDGVTGTTTEDVTGTSREETPLAEPTNVSKEAPGNFHILPIDQSADTTQSNGIIGGPGPVLVPNPGEIKEFTEIRDVDARELNERLNKKEEVPEPVAGPIVESSVTEKSPALPQADDPIVETKEVAHNVQELTPQVEAVTPLINEPEPLPTPEAQISIPESSKVEPVEGSLQSKLVEKRESTEGVLDGSKKVENKAKKDEEVFTLDPIVNKAPKLPLTDEQTAEGRKSPAVSEEKEKKKKQEKGSKEVKRSETSKEKKPSAKEVKKQTVKASKKQTASPLSSSTEEPKKKKTGFFGKLKKLFK</sequence>
<gene>
    <name type="primary">CRP1</name>
    <name type="ORF">SCRG_04858</name>
</gene>